<gene>
    <name type="primary">LOGL5</name>
    <name type="ordered locus">Os03g0857900</name>
    <name type="ordered locus">LOC_Os03g64070</name>
    <name type="ORF">OsJ_23804</name>
    <name type="ORF">OSJNBa0059G06.12</name>
</gene>
<reference key="1">
    <citation type="journal article" date="2005" name="Genome Res.">
        <title>Sequence, annotation, and analysis of synteny between rice chromosome 3 and diverged grass species.</title>
        <authorList>
            <consortium name="The rice chromosome 3 sequencing consortium"/>
            <person name="Buell C.R."/>
            <person name="Yuan Q."/>
            <person name="Ouyang S."/>
            <person name="Liu J."/>
            <person name="Zhu W."/>
            <person name="Wang A."/>
            <person name="Maiti R."/>
            <person name="Haas B."/>
            <person name="Wortman J."/>
            <person name="Pertea M."/>
            <person name="Jones K.M."/>
            <person name="Kim M."/>
            <person name="Overton L."/>
            <person name="Tsitrin T."/>
            <person name="Fadrosh D."/>
            <person name="Bera J."/>
            <person name="Weaver B."/>
            <person name="Jin S."/>
            <person name="Johri S."/>
            <person name="Reardon M."/>
            <person name="Webb K."/>
            <person name="Hill J."/>
            <person name="Moffat K."/>
            <person name="Tallon L."/>
            <person name="Van Aken S."/>
            <person name="Lewis M."/>
            <person name="Utterback T."/>
            <person name="Feldblyum T."/>
            <person name="Zismann V."/>
            <person name="Iobst S."/>
            <person name="Hsiao J."/>
            <person name="de Vazeille A.R."/>
            <person name="Salzberg S.L."/>
            <person name="White O."/>
            <person name="Fraser C.M."/>
            <person name="Yu Y."/>
            <person name="Kim H."/>
            <person name="Rambo T."/>
            <person name="Currie J."/>
            <person name="Collura K."/>
            <person name="Kernodle-Thompson S."/>
            <person name="Wei F."/>
            <person name="Kudrna K."/>
            <person name="Ammiraju J.S.S."/>
            <person name="Luo M."/>
            <person name="Goicoechea J.L."/>
            <person name="Wing R.A."/>
            <person name="Henry D."/>
            <person name="Oates R."/>
            <person name="Palmer M."/>
            <person name="Pries G."/>
            <person name="Saski C."/>
            <person name="Simmons J."/>
            <person name="Soderlund C."/>
            <person name="Nelson W."/>
            <person name="de la Bastide M."/>
            <person name="Spiegel L."/>
            <person name="Nascimento L."/>
            <person name="Huang E."/>
            <person name="Preston R."/>
            <person name="Zutavern T."/>
            <person name="Palmer L."/>
            <person name="O'Shaughnessy A."/>
            <person name="Dike S."/>
            <person name="McCombie W.R."/>
            <person name="Minx P."/>
            <person name="Cordum H."/>
            <person name="Wilson R."/>
            <person name="Jin W."/>
            <person name="Lee H.R."/>
            <person name="Jiang J."/>
            <person name="Jackson S."/>
        </authorList>
    </citation>
    <scope>NUCLEOTIDE SEQUENCE [LARGE SCALE GENOMIC DNA]</scope>
    <source>
        <strain>cv. Nipponbare</strain>
    </source>
</reference>
<reference key="2">
    <citation type="journal article" date="2005" name="Nature">
        <title>The map-based sequence of the rice genome.</title>
        <authorList>
            <consortium name="International rice genome sequencing project (IRGSP)"/>
        </authorList>
    </citation>
    <scope>NUCLEOTIDE SEQUENCE [LARGE SCALE GENOMIC DNA]</scope>
    <source>
        <strain>cv. Nipponbare</strain>
    </source>
</reference>
<reference key="3">
    <citation type="journal article" date="2008" name="Nucleic Acids Res.">
        <title>The rice annotation project database (RAP-DB): 2008 update.</title>
        <authorList>
            <consortium name="The rice annotation project (RAP)"/>
        </authorList>
    </citation>
    <scope>GENOME REANNOTATION</scope>
    <source>
        <strain>cv. Nipponbare</strain>
    </source>
</reference>
<reference key="4">
    <citation type="journal article" date="2013" name="Rice">
        <title>Improvement of the Oryza sativa Nipponbare reference genome using next generation sequence and optical map data.</title>
        <authorList>
            <person name="Kawahara Y."/>
            <person name="de la Bastide M."/>
            <person name="Hamilton J.P."/>
            <person name="Kanamori H."/>
            <person name="McCombie W.R."/>
            <person name="Ouyang S."/>
            <person name="Schwartz D.C."/>
            <person name="Tanaka T."/>
            <person name="Wu J."/>
            <person name="Zhou S."/>
            <person name="Childs K.L."/>
            <person name="Davidson R.M."/>
            <person name="Lin H."/>
            <person name="Quesada-Ocampo L."/>
            <person name="Vaillancourt B."/>
            <person name="Sakai H."/>
            <person name="Lee S.S."/>
            <person name="Kim J."/>
            <person name="Numa H."/>
            <person name="Itoh T."/>
            <person name="Buell C.R."/>
            <person name="Matsumoto T."/>
        </authorList>
    </citation>
    <scope>GENOME REANNOTATION</scope>
    <source>
        <strain>cv. Nipponbare</strain>
    </source>
</reference>
<reference key="5">
    <citation type="journal article" date="2005" name="PLoS Biol.">
        <title>The genomes of Oryza sativa: a history of duplications.</title>
        <authorList>
            <person name="Yu J."/>
            <person name="Wang J."/>
            <person name="Lin W."/>
            <person name="Li S."/>
            <person name="Li H."/>
            <person name="Zhou J."/>
            <person name="Ni P."/>
            <person name="Dong W."/>
            <person name="Hu S."/>
            <person name="Zeng C."/>
            <person name="Zhang J."/>
            <person name="Zhang Y."/>
            <person name="Li R."/>
            <person name="Xu Z."/>
            <person name="Li S."/>
            <person name="Li X."/>
            <person name="Zheng H."/>
            <person name="Cong L."/>
            <person name="Lin L."/>
            <person name="Yin J."/>
            <person name="Geng J."/>
            <person name="Li G."/>
            <person name="Shi J."/>
            <person name="Liu J."/>
            <person name="Lv H."/>
            <person name="Li J."/>
            <person name="Wang J."/>
            <person name="Deng Y."/>
            <person name="Ran L."/>
            <person name="Shi X."/>
            <person name="Wang X."/>
            <person name="Wu Q."/>
            <person name="Li C."/>
            <person name="Ren X."/>
            <person name="Wang J."/>
            <person name="Wang X."/>
            <person name="Li D."/>
            <person name="Liu D."/>
            <person name="Zhang X."/>
            <person name="Ji Z."/>
            <person name="Zhao W."/>
            <person name="Sun Y."/>
            <person name="Zhang Z."/>
            <person name="Bao J."/>
            <person name="Han Y."/>
            <person name="Dong L."/>
            <person name="Ji J."/>
            <person name="Chen P."/>
            <person name="Wu S."/>
            <person name="Liu J."/>
            <person name="Xiao Y."/>
            <person name="Bu D."/>
            <person name="Tan J."/>
            <person name="Yang L."/>
            <person name="Ye C."/>
            <person name="Zhang J."/>
            <person name="Xu J."/>
            <person name="Zhou Y."/>
            <person name="Yu Y."/>
            <person name="Zhang B."/>
            <person name="Zhuang S."/>
            <person name="Wei H."/>
            <person name="Liu B."/>
            <person name="Lei M."/>
            <person name="Yu H."/>
            <person name="Li Y."/>
            <person name="Xu H."/>
            <person name="Wei S."/>
            <person name="He X."/>
            <person name="Fang L."/>
            <person name="Zhang Z."/>
            <person name="Zhang Y."/>
            <person name="Huang X."/>
            <person name="Su Z."/>
            <person name="Tong W."/>
            <person name="Li J."/>
            <person name="Tong Z."/>
            <person name="Li S."/>
            <person name="Ye J."/>
            <person name="Wang L."/>
            <person name="Fang L."/>
            <person name="Lei T."/>
            <person name="Chen C.-S."/>
            <person name="Chen H.-C."/>
            <person name="Xu Z."/>
            <person name="Li H."/>
            <person name="Huang H."/>
            <person name="Zhang F."/>
            <person name="Xu H."/>
            <person name="Li N."/>
            <person name="Zhao C."/>
            <person name="Li S."/>
            <person name="Dong L."/>
            <person name="Huang Y."/>
            <person name="Li L."/>
            <person name="Xi Y."/>
            <person name="Qi Q."/>
            <person name="Li W."/>
            <person name="Zhang B."/>
            <person name="Hu W."/>
            <person name="Zhang Y."/>
            <person name="Tian X."/>
            <person name="Jiao Y."/>
            <person name="Liang X."/>
            <person name="Jin J."/>
            <person name="Gao L."/>
            <person name="Zheng W."/>
            <person name="Hao B."/>
            <person name="Liu S.-M."/>
            <person name="Wang W."/>
            <person name="Yuan L."/>
            <person name="Cao M."/>
            <person name="McDermott J."/>
            <person name="Samudrala R."/>
            <person name="Wang J."/>
            <person name="Wong G.K.-S."/>
            <person name="Yang H."/>
        </authorList>
    </citation>
    <scope>NUCLEOTIDE SEQUENCE [LARGE SCALE GENOMIC DNA]</scope>
    <source>
        <strain>cv. Nipponbare</strain>
    </source>
</reference>
<reference key="6">
    <citation type="journal article" date="2003" name="Science">
        <title>Collection, mapping, and annotation of over 28,000 cDNA clones from japonica rice.</title>
        <authorList>
            <consortium name="The rice full-length cDNA consortium"/>
        </authorList>
    </citation>
    <scope>NUCLEOTIDE SEQUENCE [LARGE SCALE MRNA]</scope>
    <source>
        <strain>cv. Nipponbare</strain>
    </source>
</reference>
<reference key="7">
    <citation type="journal article" date="2007" name="Nature">
        <title>Direct control of shoot meristem activity by a cytokinin-activating enzyme.</title>
        <authorList>
            <person name="Kurakawa T."/>
            <person name="Ueda N."/>
            <person name="Maekawa M."/>
            <person name="Kobayashi K."/>
            <person name="Kojima M."/>
            <person name="Nagato Y."/>
            <person name="Sakakibara H."/>
            <person name="Kyozuka J."/>
        </authorList>
    </citation>
    <scope>IDENTIFICATION</scope>
    <scope>TISSUE SPECIFICITY</scope>
</reference>
<reference key="8">
    <citation type="journal article" date="2009" name="Plant Cell">
        <title>Functional analyses of LONELY GUY cytokinin-activating enzymes reveal the importance of the direct activation pathway in Arabidopsis.</title>
        <authorList>
            <person name="Kuroha T."/>
            <person name="Tokunaga H."/>
            <person name="Kojima M."/>
            <person name="Ueda N."/>
            <person name="Ishida T."/>
            <person name="Nagawa S."/>
            <person name="Fukuda H."/>
            <person name="Sugimoto K."/>
            <person name="Sakakibara H."/>
        </authorList>
    </citation>
    <scope>GENE FAMILY</scope>
    <scope>NOMENCLATURE</scope>
</reference>
<proteinExistence type="evidence at transcript level"/>
<accession>Q84M85</accession>
<accession>A0A0P0W5R7</accession>
<accession>A3BII6</accession>
<dbReference type="EC" id="3.2.2.n1"/>
<dbReference type="EMBL" id="AC096690">
    <property type="protein sequence ID" value="AAP21384.1"/>
    <property type="molecule type" value="Genomic_DNA"/>
</dbReference>
<dbReference type="EMBL" id="DP000009">
    <property type="protein sequence ID" value="ABF99999.1"/>
    <property type="molecule type" value="Genomic_DNA"/>
</dbReference>
<dbReference type="EMBL" id="AP008209">
    <property type="protein sequence ID" value="BAF13872.1"/>
    <property type="molecule type" value="Genomic_DNA"/>
</dbReference>
<dbReference type="EMBL" id="AP014959">
    <property type="protein sequence ID" value="BAS87462.1"/>
    <property type="molecule type" value="Genomic_DNA"/>
</dbReference>
<dbReference type="EMBL" id="CM000144">
    <property type="protein sequence ID" value="EAZ39375.1"/>
    <property type="status" value="ALT_INIT"/>
    <property type="molecule type" value="Genomic_DNA"/>
</dbReference>
<dbReference type="EMBL" id="AK061341">
    <property type="protein sequence ID" value="BAG87867.1"/>
    <property type="molecule type" value="mRNA"/>
</dbReference>
<dbReference type="EMBL" id="AK071705">
    <property type="protein sequence ID" value="BAG92639.1"/>
    <property type="molecule type" value="mRNA"/>
</dbReference>
<dbReference type="EMBL" id="AK104022">
    <property type="protein sequence ID" value="BAG96377.1"/>
    <property type="molecule type" value="mRNA"/>
</dbReference>
<dbReference type="RefSeq" id="XP_015628468.1">
    <property type="nucleotide sequence ID" value="XM_015772982.1"/>
</dbReference>
<dbReference type="SMR" id="Q84M85"/>
<dbReference type="FunCoup" id="Q84M85">
    <property type="interactions" value="10"/>
</dbReference>
<dbReference type="STRING" id="39947.Q84M85"/>
<dbReference type="PaxDb" id="39947-Q84M85"/>
<dbReference type="EnsemblPlants" id="Os03t0857900-02">
    <property type="protein sequence ID" value="Os03t0857900-02"/>
    <property type="gene ID" value="Os03g0857900"/>
</dbReference>
<dbReference type="EnsemblPlants" id="Os03t0857900-04">
    <property type="protein sequence ID" value="Os03t0857900-04"/>
    <property type="gene ID" value="Os03g0857900"/>
</dbReference>
<dbReference type="Gramene" id="Os03t0857900-02">
    <property type="protein sequence ID" value="Os03t0857900-02"/>
    <property type="gene ID" value="Os03g0857900"/>
</dbReference>
<dbReference type="Gramene" id="Os03t0857900-04">
    <property type="protein sequence ID" value="Os03t0857900-04"/>
    <property type="gene ID" value="Os03g0857900"/>
</dbReference>
<dbReference type="KEGG" id="dosa:Os03g0857900"/>
<dbReference type="eggNOG" id="ENOG502QSR9">
    <property type="taxonomic scope" value="Eukaryota"/>
</dbReference>
<dbReference type="HOGENOM" id="CLU_058336_2_0_1"/>
<dbReference type="InParanoid" id="Q84M85"/>
<dbReference type="OMA" id="MMMENSR"/>
<dbReference type="OrthoDB" id="414463at2759"/>
<dbReference type="Proteomes" id="UP000000763">
    <property type="component" value="Chromosome 3"/>
</dbReference>
<dbReference type="Proteomes" id="UP000007752">
    <property type="component" value="Chromosome 7"/>
</dbReference>
<dbReference type="Proteomes" id="UP000059680">
    <property type="component" value="Chromosome 3"/>
</dbReference>
<dbReference type="GO" id="GO:0005829">
    <property type="term" value="C:cytosol"/>
    <property type="evidence" value="ECO:0000318"/>
    <property type="project" value="GO_Central"/>
</dbReference>
<dbReference type="GO" id="GO:0005634">
    <property type="term" value="C:nucleus"/>
    <property type="evidence" value="ECO:0000318"/>
    <property type="project" value="GO_Central"/>
</dbReference>
<dbReference type="GO" id="GO:0102682">
    <property type="term" value="F:cytokinin riboside 5'-monophosphate phosphoribohydrolase activity"/>
    <property type="evidence" value="ECO:0000318"/>
    <property type="project" value="GO_Central"/>
</dbReference>
<dbReference type="GO" id="GO:0009691">
    <property type="term" value="P:cytokinin biosynthetic process"/>
    <property type="evidence" value="ECO:0000318"/>
    <property type="project" value="GO_Central"/>
</dbReference>
<dbReference type="FunFam" id="3.40.50.450:FF:000005">
    <property type="entry name" value="CASP-like protein"/>
    <property type="match status" value="1"/>
</dbReference>
<dbReference type="Gene3D" id="3.40.50.450">
    <property type="match status" value="1"/>
</dbReference>
<dbReference type="InterPro" id="IPR005269">
    <property type="entry name" value="LOG"/>
</dbReference>
<dbReference type="InterPro" id="IPR031100">
    <property type="entry name" value="LOG_fam"/>
</dbReference>
<dbReference type="NCBIfam" id="TIGR00730">
    <property type="entry name" value="Rossman fold protein, TIGR00730 family"/>
    <property type="match status" value="1"/>
</dbReference>
<dbReference type="PANTHER" id="PTHR31223:SF85">
    <property type="entry name" value="CYTOKININ RIBOSIDE 5'-MONOPHOSPHATE PHOSPHORIBOHYDROLASE LOGL5-RELATED"/>
    <property type="match status" value="1"/>
</dbReference>
<dbReference type="PANTHER" id="PTHR31223">
    <property type="entry name" value="LOG FAMILY PROTEIN YJL055W"/>
    <property type="match status" value="1"/>
</dbReference>
<dbReference type="Pfam" id="PF03641">
    <property type="entry name" value="Lysine_decarbox"/>
    <property type="match status" value="1"/>
</dbReference>
<dbReference type="SUPFAM" id="SSF102405">
    <property type="entry name" value="MCP/YpsA-like"/>
    <property type="match status" value="1"/>
</dbReference>
<protein>
    <recommendedName>
        <fullName>Probable cytokinin riboside 5'-monophosphate phosphoribohydrolase LOGL5</fullName>
        <ecNumber>3.2.2.n1</ecNumber>
    </recommendedName>
    <alternativeName>
        <fullName>Protein LONELY GUY-like 5</fullName>
    </alternativeName>
</protein>
<sequence>MMMENSREQQPESSPANNNSKKKKKKKTASRFRRVCVFCGSSPGKKASYQVAAVQLGQQLVERGIDLVYGGGSVGLMGLVSRAVHGGGGHVVGVVPNGVLPRELIGETLGEVRAVGSMHQRKAEMARESDAFIALPGGYGTLEELLEVITWAQLRIHHKPVGLLNVDGYYDSLLAFIDKAVHEGFVSPPARRIIVAAPTASDLLCKLEEYVPPPHDATALKLTWEMSTVSEQHAGSIYSPKPDMAR</sequence>
<keyword id="KW-0203">Cytokinin biosynthesis</keyword>
<keyword id="KW-0378">Hydrolase</keyword>
<keyword id="KW-1185">Reference proteome</keyword>
<organism>
    <name type="scientific">Oryza sativa subsp. japonica</name>
    <name type="common">Rice</name>
    <dbReference type="NCBI Taxonomy" id="39947"/>
    <lineage>
        <taxon>Eukaryota</taxon>
        <taxon>Viridiplantae</taxon>
        <taxon>Streptophyta</taxon>
        <taxon>Embryophyta</taxon>
        <taxon>Tracheophyta</taxon>
        <taxon>Spermatophyta</taxon>
        <taxon>Magnoliopsida</taxon>
        <taxon>Liliopsida</taxon>
        <taxon>Poales</taxon>
        <taxon>Poaceae</taxon>
        <taxon>BOP clade</taxon>
        <taxon>Oryzoideae</taxon>
        <taxon>Oryzeae</taxon>
        <taxon>Oryzinae</taxon>
        <taxon>Oryza</taxon>
        <taxon>Oryza sativa</taxon>
    </lineage>
</organism>
<evidence type="ECO:0000250" key="1"/>
<evidence type="ECO:0000250" key="2">
    <source>
        <dbReference type="UniProtKB" id="B2HS63"/>
    </source>
</evidence>
<evidence type="ECO:0000256" key="3">
    <source>
        <dbReference type="SAM" id="MobiDB-lite"/>
    </source>
</evidence>
<evidence type="ECO:0000269" key="4">
    <source>
    </source>
</evidence>
<evidence type="ECO:0000305" key="5"/>
<name>LOGL5_ORYSJ</name>
<feature type="chain" id="PRO_0000395057" description="Probable cytokinin riboside 5'-monophosphate phosphoribohydrolase LOGL5">
    <location>
        <begin position="1"/>
        <end position="246"/>
    </location>
</feature>
<feature type="region of interest" description="Disordered" evidence="3">
    <location>
        <begin position="1"/>
        <end position="28"/>
    </location>
</feature>
<feature type="compositionally biased region" description="Basic and acidic residues" evidence="3">
    <location>
        <begin position="1"/>
        <end position="10"/>
    </location>
</feature>
<feature type="binding site" evidence="2">
    <location>
        <position position="103"/>
    </location>
    <ligand>
        <name>substrate</name>
    </ligand>
</feature>
<feature type="binding site" evidence="2">
    <location>
        <begin position="121"/>
        <end position="122"/>
    </location>
    <ligand>
        <name>substrate</name>
    </ligand>
</feature>
<feature type="binding site" evidence="2">
    <location>
        <begin position="138"/>
        <end position="144"/>
    </location>
    <ligand>
        <name>substrate</name>
    </ligand>
</feature>
<feature type="binding site" evidence="2">
    <location>
        <position position="150"/>
    </location>
    <ligand>
        <name>substrate</name>
    </ligand>
</feature>
<comment type="function">
    <text evidence="1">Cytokinin-activating enzyme working in the direct activation pathway. Phosphoribohydrolase that converts inactive cytokinin nucleotides to the biologically active free-base forms (By similarity).</text>
</comment>
<comment type="catalytic activity">
    <reaction>
        <text>N(6)-(dimethylallyl)adenosine 5'-phosphate + H2O = N(6)-dimethylallyladenine + D-ribose 5-phosphate</text>
        <dbReference type="Rhea" id="RHEA:48560"/>
        <dbReference type="ChEBI" id="CHEBI:15377"/>
        <dbReference type="ChEBI" id="CHEBI:17660"/>
        <dbReference type="ChEBI" id="CHEBI:57526"/>
        <dbReference type="ChEBI" id="CHEBI:78346"/>
        <dbReference type="EC" id="3.2.2.n1"/>
    </reaction>
</comment>
<comment type="catalytic activity">
    <reaction>
        <text>9-ribosyl-trans-zeatin 5'-phosphate + H2O = trans-zeatin + D-ribose 5-phosphate</text>
        <dbReference type="Rhea" id="RHEA:48564"/>
        <dbReference type="ChEBI" id="CHEBI:15377"/>
        <dbReference type="ChEBI" id="CHEBI:16522"/>
        <dbReference type="ChEBI" id="CHEBI:78346"/>
        <dbReference type="ChEBI" id="CHEBI:87947"/>
        <dbReference type="EC" id="3.2.2.n1"/>
    </reaction>
</comment>
<comment type="tissue specificity">
    <text evidence="4">Expressed in roots and leaves.</text>
</comment>
<comment type="similarity">
    <text evidence="5">Belongs to the LOG family.</text>
</comment>
<comment type="sequence caution" evidence="5">
    <conflict type="erroneous initiation">
        <sequence resource="EMBL-CDS" id="EAZ39375"/>
    </conflict>
    <text>Truncated N-terminus.</text>
</comment>